<gene>
    <name type="primary">BHLH137</name>
    <name type="synonym">EN89</name>
    <name type="ordered locus">At5g50915</name>
    <name type="ORF">K3K7</name>
</gene>
<sequence length="286" mass="31773">MATFSYFQNYPHSLLDPLLFPTPHSSINLTSFIDQNHLYPLPNISTVEDISFLEYNVDKTENSGSEKLANTTKTATTGSSSCDQLSHGPSAITNTGKTRGRKARNSNNSKEGVEGRKSKKQKRGSKEEPPTDYIHVRARRGQATDSHSLAERVRREKISERMRTLQNLVPGCDKVTGKALMLDEIINYVQTLQTQVEFLSMKLTSISPVVYDFGSDLDGLILQSEMGSPEVGTSFTNAMPTTTPIFPSLLDNSVVPTHAQVQEEGEERENFVDRSGFNNNNFCSFP</sequence>
<proteinExistence type="evidence at protein level"/>
<accession>Q93W88</accession>
<organism>
    <name type="scientific">Arabidopsis thaliana</name>
    <name type="common">Mouse-ear cress</name>
    <dbReference type="NCBI Taxonomy" id="3702"/>
    <lineage>
        <taxon>Eukaryota</taxon>
        <taxon>Viridiplantae</taxon>
        <taxon>Streptophyta</taxon>
        <taxon>Embryophyta</taxon>
        <taxon>Tracheophyta</taxon>
        <taxon>Spermatophyta</taxon>
        <taxon>Magnoliopsida</taxon>
        <taxon>eudicotyledons</taxon>
        <taxon>Gunneridae</taxon>
        <taxon>Pentapetalae</taxon>
        <taxon>rosids</taxon>
        <taxon>malvids</taxon>
        <taxon>Brassicales</taxon>
        <taxon>Brassicaceae</taxon>
        <taxon>Camelineae</taxon>
        <taxon>Arabidopsis</taxon>
    </lineage>
</organism>
<dbReference type="EMBL" id="AB017063">
    <property type="status" value="NOT_ANNOTATED_CDS"/>
    <property type="molecule type" value="Genomic_DNA"/>
</dbReference>
<dbReference type="EMBL" id="CP002688">
    <property type="protein sequence ID" value="AED96009.1"/>
    <property type="molecule type" value="Genomic_DNA"/>
</dbReference>
<dbReference type="EMBL" id="CP002688">
    <property type="protein sequence ID" value="AED96010.1"/>
    <property type="molecule type" value="Genomic_DNA"/>
</dbReference>
<dbReference type="EMBL" id="AF428350">
    <property type="protein sequence ID" value="AAL16280.1"/>
    <property type="molecule type" value="mRNA"/>
</dbReference>
<dbReference type="EMBL" id="AY057549">
    <property type="protein sequence ID" value="AAL09788.1"/>
    <property type="molecule type" value="mRNA"/>
</dbReference>
<dbReference type="EMBL" id="AY113059">
    <property type="protein sequence ID" value="AAM47367.1"/>
    <property type="molecule type" value="mRNA"/>
</dbReference>
<dbReference type="EMBL" id="AY087602">
    <property type="protein sequence ID" value="AAM65144.1"/>
    <property type="molecule type" value="mRNA"/>
</dbReference>
<dbReference type="RefSeq" id="NP_568745.1">
    <property type="nucleotide sequence ID" value="NM_124470.3"/>
</dbReference>
<dbReference type="RefSeq" id="NP_851163.1">
    <property type="nucleotide sequence ID" value="NM_180832.3"/>
</dbReference>
<dbReference type="SMR" id="Q93W88"/>
<dbReference type="BioGRID" id="20410">
    <property type="interactions" value="36"/>
</dbReference>
<dbReference type="FunCoup" id="Q93W88">
    <property type="interactions" value="114"/>
</dbReference>
<dbReference type="IntAct" id="Q93W88">
    <property type="interactions" value="37"/>
</dbReference>
<dbReference type="STRING" id="3702.Q93W88"/>
<dbReference type="PaxDb" id="3702-AT5G50915.1"/>
<dbReference type="EnsemblPlants" id="AT5G50915.1">
    <property type="protein sequence ID" value="AT5G50915.1"/>
    <property type="gene ID" value="AT5G50915"/>
</dbReference>
<dbReference type="EnsemblPlants" id="AT5G50915.2">
    <property type="protein sequence ID" value="AT5G50915.2"/>
    <property type="gene ID" value="AT5G50915"/>
</dbReference>
<dbReference type="GeneID" id="835164"/>
<dbReference type="Gramene" id="AT5G50915.1">
    <property type="protein sequence ID" value="AT5G50915.1"/>
    <property type="gene ID" value="AT5G50915"/>
</dbReference>
<dbReference type="Gramene" id="AT5G50915.2">
    <property type="protein sequence ID" value="AT5G50915.2"/>
    <property type="gene ID" value="AT5G50915"/>
</dbReference>
<dbReference type="KEGG" id="ath:AT5G50915"/>
<dbReference type="Araport" id="AT5G50915"/>
<dbReference type="TAIR" id="AT5G50915"/>
<dbReference type="eggNOG" id="ENOG502R2X6">
    <property type="taxonomic scope" value="Eukaryota"/>
</dbReference>
<dbReference type="HOGENOM" id="CLU_061056_0_0_1"/>
<dbReference type="InParanoid" id="Q93W88"/>
<dbReference type="OMA" id="NNNFCSF"/>
<dbReference type="OrthoDB" id="1928604at2759"/>
<dbReference type="PhylomeDB" id="Q93W88"/>
<dbReference type="PRO" id="PR:Q93W88"/>
<dbReference type="Proteomes" id="UP000006548">
    <property type="component" value="Chromosome 5"/>
</dbReference>
<dbReference type="ExpressionAtlas" id="Q93W88">
    <property type="expression patterns" value="baseline and differential"/>
</dbReference>
<dbReference type="GO" id="GO:0005634">
    <property type="term" value="C:nucleus"/>
    <property type="evidence" value="ECO:0000314"/>
    <property type="project" value="TAIR"/>
</dbReference>
<dbReference type="GO" id="GO:0003677">
    <property type="term" value="F:DNA binding"/>
    <property type="evidence" value="ECO:0007669"/>
    <property type="project" value="UniProtKB-KW"/>
</dbReference>
<dbReference type="GO" id="GO:0003700">
    <property type="term" value="F:DNA-binding transcription factor activity"/>
    <property type="evidence" value="ECO:0000314"/>
    <property type="project" value="TAIR"/>
</dbReference>
<dbReference type="GO" id="GO:0046983">
    <property type="term" value="F:protein dimerization activity"/>
    <property type="evidence" value="ECO:0007669"/>
    <property type="project" value="InterPro"/>
</dbReference>
<dbReference type="GO" id="GO:0071368">
    <property type="term" value="P:cellular response to cytokinin stimulus"/>
    <property type="evidence" value="ECO:0000270"/>
    <property type="project" value="TAIR"/>
</dbReference>
<dbReference type="GO" id="GO:0042127">
    <property type="term" value="P:regulation of cell population proliferation"/>
    <property type="evidence" value="ECO:0000314"/>
    <property type="project" value="TAIR"/>
</dbReference>
<dbReference type="GO" id="GO:0009739">
    <property type="term" value="P:response to gibberellin"/>
    <property type="evidence" value="ECO:0000270"/>
    <property type="project" value="TAIR"/>
</dbReference>
<dbReference type="CDD" id="cd18919">
    <property type="entry name" value="bHLH_AtBPE_like"/>
    <property type="match status" value="1"/>
</dbReference>
<dbReference type="FunFam" id="4.10.280.10:FF:000002">
    <property type="entry name" value="Basic helix-loop-helix transcription factor"/>
    <property type="match status" value="1"/>
</dbReference>
<dbReference type="Gene3D" id="4.10.280.10">
    <property type="entry name" value="Helix-loop-helix DNA-binding domain"/>
    <property type="match status" value="1"/>
</dbReference>
<dbReference type="InterPro" id="IPR011598">
    <property type="entry name" value="bHLH_dom"/>
</dbReference>
<dbReference type="InterPro" id="IPR024097">
    <property type="entry name" value="bHLH_ZIP_TF"/>
</dbReference>
<dbReference type="InterPro" id="IPR036638">
    <property type="entry name" value="HLH_DNA-bd_sf"/>
</dbReference>
<dbReference type="PANTHER" id="PTHR12565">
    <property type="entry name" value="STEROL REGULATORY ELEMENT-BINDING PROTEIN"/>
    <property type="match status" value="1"/>
</dbReference>
<dbReference type="PANTHER" id="PTHR12565:SF431">
    <property type="entry name" value="TRANSCRIPTION FACTOR BHLH137"/>
    <property type="match status" value="1"/>
</dbReference>
<dbReference type="Pfam" id="PF00010">
    <property type="entry name" value="HLH"/>
    <property type="match status" value="1"/>
</dbReference>
<dbReference type="SMART" id="SM00353">
    <property type="entry name" value="HLH"/>
    <property type="match status" value="1"/>
</dbReference>
<dbReference type="SUPFAM" id="SSF47459">
    <property type="entry name" value="HLH, helix-loop-helix DNA-binding domain"/>
    <property type="match status" value="1"/>
</dbReference>
<dbReference type="PROSITE" id="PS50888">
    <property type="entry name" value="BHLH"/>
    <property type="match status" value="1"/>
</dbReference>
<evidence type="ECO:0000255" key="1">
    <source>
        <dbReference type="PROSITE-ProRule" id="PRU00981"/>
    </source>
</evidence>
<evidence type="ECO:0000256" key="2">
    <source>
        <dbReference type="SAM" id="MobiDB-lite"/>
    </source>
</evidence>
<evidence type="ECO:0000305" key="3"/>
<comment type="subunit">
    <text evidence="3">Homodimer.</text>
</comment>
<comment type="interaction">
    <interactant intactId="EBI-15198405">
        <id>Q93W88</id>
    </interactant>
    <interactant intactId="EBI-15191993">
        <id>Q9LV17</id>
        <label>BHLH79</label>
    </interactant>
    <organismsDiffer>false</organismsDiffer>
    <experiments>3</experiments>
</comment>
<comment type="subcellular location">
    <subcellularLocation>
        <location evidence="1">Nucleus</location>
    </subcellularLocation>
</comment>
<feature type="chain" id="PRO_0000358818" description="Transcription factor bHLH137">
    <location>
        <begin position="1"/>
        <end position="286"/>
    </location>
</feature>
<feature type="domain" description="bHLH" evidence="1">
    <location>
        <begin position="142"/>
        <end position="192"/>
    </location>
</feature>
<feature type="region of interest" description="Disordered" evidence="2">
    <location>
        <begin position="63"/>
        <end position="149"/>
    </location>
</feature>
<feature type="compositionally biased region" description="Polar residues" evidence="2">
    <location>
        <begin position="63"/>
        <end position="84"/>
    </location>
</feature>
<name>BH137_ARATH</name>
<protein>
    <recommendedName>
        <fullName>Transcription factor bHLH137</fullName>
    </recommendedName>
    <alternativeName>
        <fullName>Basic helix-loop-helix protein 137</fullName>
        <shortName>AtbHLH137</shortName>
        <shortName>bHLH 137</shortName>
    </alternativeName>
    <alternativeName>
        <fullName>Transcription factor EN 89</fullName>
    </alternativeName>
    <alternativeName>
        <fullName>bHLH transcription factor bHLH137</fullName>
    </alternativeName>
</protein>
<keyword id="KW-0238">DNA-binding</keyword>
<keyword id="KW-0539">Nucleus</keyword>
<keyword id="KW-1185">Reference proteome</keyword>
<keyword id="KW-0804">Transcription</keyword>
<keyword id="KW-0805">Transcription regulation</keyword>
<reference key="1">
    <citation type="journal article" date="1999" name="DNA Res.">
        <title>Structural analysis of Arabidopsis thaliana chromosome 5. IX. Sequence features of the regions of 1,011,550 bp covered by seventeen P1 and TAC clones.</title>
        <authorList>
            <person name="Kaneko T."/>
            <person name="Katoh T."/>
            <person name="Sato S."/>
            <person name="Nakamura Y."/>
            <person name="Asamizu E."/>
            <person name="Kotani H."/>
            <person name="Miyajima N."/>
            <person name="Tabata S."/>
        </authorList>
    </citation>
    <scope>NUCLEOTIDE SEQUENCE [LARGE SCALE GENOMIC DNA]</scope>
    <source>
        <strain>cv. Columbia</strain>
    </source>
</reference>
<reference key="2">
    <citation type="journal article" date="2017" name="Plant J.">
        <title>Araport11: a complete reannotation of the Arabidopsis thaliana reference genome.</title>
        <authorList>
            <person name="Cheng C.Y."/>
            <person name="Krishnakumar V."/>
            <person name="Chan A.P."/>
            <person name="Thibaud-Nissen F."/>
            <person name="Schobel S."/>
            <person name="Town C.D."/>
        </authorList>
    </citation>
    <scope>GENOME REANNOTATION</scope>
    <source>
        <strain>cv. Columbia</strain>
    </source>
</reference>
<reference key="3">
    <citation type="journal article" date="2003" name="Science">
        <title>Empirical analysis of transcriptional activity in the Arabidopsis genome.</title>
        <authorList>
            <person name="Yamada K."/>
            <person name="Lim J."/>
            <person name="Dale J.M."/>
            <person name="Chen H."/>
            <person name="Shinn P."/>
            <person name="Palm C.J."/>
            <person name="Southwick A.M."/>
            <person name="Wu H.C."/>
            <person name="Kim C.J."/>
            <person name="Nguyen M."/>
            <person name="Pham P.K."/>
            <person name="Cheuk R.F."/>
            <person name="Karlin-Newmann G."/>
            <person name="Liu S.X."/>
            <person name="Lam B."/>
            <person name="Sakano H."/>
            <person name="Wu T."/>
            <person name="Yu G."/>
            <person name="Miranda M."/>
            <person name="Quach H.L."/>
            <person name="Tripp M."/>
            <person name="Chang C.H."/>
            <person name="Lee J.M."/>
            <person name="Toriumi M.J."/>
            <person name="Chan M.M."/>
            <person name="Tang C.C."/>
            <person name="Onodera C.S."/>
            <person name="Deng J.M."/>
            <person name="Akiyama K."/>
            <person name="Ansari Y."/>
            <person name="Arakawa T."/>
            <person name="Banh J."/>
            <person name="Banno F."/>
            <person name="Bowser L."/>
            <person name="Brooks S.Y."/>
            <person name="Carninci P."/>
            <person name="Chao Q."/>
            <person name="Choy N."/>
            <person name="Enju A."/>
            <person name="Goldsmith A.D."/>
            <person name="Gurjal M."/>
            <person name="Hansen N.F."/>
            <person name="Hayashizaki Y."/>
            <person name="Johnson-Hopson C."/>
            <person name="Hsuan V.W."/>
            <person name="Iida K."/>
            <person name="Karnes M."/>
            <person name="Khan S."/>
            <person name="Koesema E."/>
            <person name="Ishida J."/>
            <person name="Jiang P.X."/>
            <person name="Jones T."/>
            <person name="Kawai J."/>
            <person name="Kamiya A."/>
            <person name="Meyers C."/>
            <person name="Nakajima M."/>
            <person name="Narusaka M."/>
            <person name="Seki M."/>
            <person name="Sakurai T."/>
            <person name="Satou M."/>
            <person name="Tamse R."/>
            <person name="Vaysberg M."/>
            <person name="Wallender E.K."/>
            <person name="Wong C."/>
            <person name="Yamamura Y."/>
            <person name="Yuan S."/>
            <person name="Shinozaki K."/>
            <person name="Davis R.W."/>
            <person name="Theologis A."/>
            <person name="Ecker J.R."/>
        </authorList>
    </citation>
    <scope>NUCLEOTIDE SEQUENCE [LARGE SCALE MRNA]</scope>
    <source>
        <strain>cv. Columbia</strain>
    </source>
</reference>
<reference key="4">
    <citation type="submission" date="2002-03" db="EMBL/GenBank/DDBJ databases">
        <title>Full-length cDNA from Arabidopsis thaliana.</title>
        <authorList>
            <person name="Brover V.V."/>
            <person name="Troukhan M.E."/>
            <person name="Alexandrov N.A."/>
            <person name="Lu Y.-P."/>
            <person name="Flavell R.B."/>
            <person name="Feldmann K.A."/>
        </authorList>
    </citation>
    <scope>NUCLEOTIDE SEQUENCE [LARGE SCALE MRNA]</scope>
</reference>
<reference key="5">
    <citation type="journal article" date="2003" name="Plant Cell">
        <title>The Arabidopsis basic/helix-loop-helix transcription factor family.</title>
        <authorList>
            <person name="Toledo-Ortiz G."/>
            <person name="Huq E."/>
            <person name="Quail P.H."/>
        </authorList>
    </citation>
    <scope>GENE FAMILY</scope>
    <scope>NOMENCLATURE</scope>
</reference>
<reference key="6">
    <citation type="journal article" date="2003" name="Plant Cell">
        <title>Update on the basic helix-loop-helix transcription factor gene family in Arabidopsis thaliana.</title>
        <authorList>
            <person name="Bailey P.C."/>
            <person name="Martin C."/>
            <person name="Toledo-Ortiz G."/>
            <person name="Quail P.H."/>
            <person name="Huq E."/>
            <person name="Heim M.A."/>
            <person name="Jakoby M."/>
            <person name="Werber M."/>
            <person name="Weisshaar B."/>
        </authorList>
    </citation>
    <scope>GENE FAMILY</scope>
    <scope>NOMENCLATURE</scope>
</reference>